<feature type="chain" id="PRO_0000350506" description="Probable RNA methyltransferase Tbd_1951">
    <location>
        <begin position="1"/>
        <end position="362"/>
    </location>
</feature>
<feature type="domain" description="Radical SAM core" evidence="3">
    <location>
        <begin position="92"/>
        <end position="318"/>
    </location>
</feature>
<feature type="region of interest" description="Disordered" evidence="4">
    <location>
        <begin position="342"/>
        <end position="362"/>
    </location>
</feature>
<feature type="compositionally biased region" description="Low complexity" evidence="4">
    <location>
        <begin position="343"/>
        <end position="362"/>
    </location>
</feature>
<feature type="active site" description="Proton acceptor" evidence="2">
    <location>
        <position position="89"/>
    </location>
</feature>
<feature type="active site" description="S-methylcysteine intermediate" evidence="1">
    <location>
        <position position="323"/>
    </location>
</feature>
<feature type="binding site" evidence="1">
    <location>
        <position position="106"/>
    </location>
    <ligand>
        <name>[4Fe-4S] cluster</name>
        <dbReference type="ChEBI" id="CHEBI:49883"/>
        <note>4Fe-4S-S-AdoMet</note>
    </ligand>
</feature>
<feature type="binding site" evidence="1">
    <location>
        <position position="110"/>
    </location>
    <ligand>
        <name>[4Fe-4S] cluster</name>
        <dbReference type="ChEBI" id="CHEBI:49883"/>
        <note>4Fe-4S-S-AdoMet</note>
    </ligand>
</feature>
<feature type="binding site" evidence="1">
    <location>
        <position position="113"/>
    </location>
    <ligand>
        <name>[4Fe-4S] cluster</name>
        <dbReference type="ChEBI" id="CHEBI:49883"/>
        <note>4Fe-4S-S-AdoMet</note>
    </ligand>
</feature>
<feature type="binding site" evidence="1">
    <location>
        <begin position="151"/>
        <end position="152"/>
    </location>
    <ligand>
        <name>S-adenosyl-L-methionine</name>
        <dbReference type="ChEBI" id="CHEBI:59789"/>
    </ligand>
</feature>
<feature type="binding site" evidence="1">
    <location>
        <position position="181"/>
    </location>
    <ligand>
        <name>S-adenosyl-L-methionine</name>
        <dbReference type="ChEBI" id="CHEBI:59789"/>
    </ligand>
</feature>
<feature type="binding site" evidence="1">
    <location>
        <begin position="204"/>
        <end position="206"/>
    </location>
    <ligand>
        <name>S-adenosyl-L-methionine</name>
        <dbReference type="ChEBI" id="CHEBI:59789"/>
    </ligand>
</feature>
<feature type="binding site" evidence="1">
    <location>
        <position position="280"/>
    </location>
    <ligand>
        <name>S-adenosyl-L-methionine</name>
        <dbReference type="ChEBI" id="CHEBI:59789"/>
    </ligand>
</feature>
<feature type="disulfide bond" description="(transient)" evidence="1">
    <location>
        <begin position="99"/>
        <end position="323"/>
    </location>
</feature>
<evidence type="ECO:0000250" key="1"/>
<evidence type="ECO:0000255" key="2"/>
<evidence type="ECO:0000255" key="3">
    <source>
        <dbReference type="PROSITE-ProRule" id="PRU01266"/>
    </source>
</evidence>
<evidence type="ECO:0000256" key="4">
    <source>
        <dbReference type="SAM" id="MobiDB-lite"/>
    </source>
</evidence>
<evidence type="ECO:0000305" key="5"/>
<name>Y1951_THIDA</name>
<reference key="1">
    <citation type="journal article" date="2006" name="J. Bacteriol.">
        <title>The genome sequence of the obligately chemolithoautotrophic, facultatively anaerobic bacterium Thiobacillus denitrificans.</title>
        <authorList>
            <person name="Beller H.R."/>
            <person name="Chain P.S."/>
            <person name="Letain T.E."/>
            <person name="Chakicherla A."/>
            <person name="Larimer F.W."/>
            <person name="Richardson P.M."/>
            <person name="Coleman M.A."/>
            <person name="Wood A.P."/>
            <person name="Kelly D.P."/>
        </authorList>
    </citation>
    <scope>NUCLEOTIDE SEQUENCE [LARGE SCALE GENOMIC DNA]</scope>
    <source>
        <strain>ATCC 25259 / T1</strain>
    </source>
</reference>
<protein>
    <recommendedName>
        <fullName>Probable RNA methyltransferase Tbd_1951</fullName>
        <ecNumber>2.1.1.-</ecNumber>
    </recommendedName>
</protein>
<proteinExistence type="inferred from homology"/>
<comment type="cofactor">
    <cofactor evidence="1">
        <name>[4Fe-4S] cluster</name>
        <dbReference type="ChEBI" id="CHEBI:49883"/>
    </cofactor>
    <text evidence="1">Binds 1 [4Fe-4S] cluster. The cluster is coordinated with 3 cysteines and an exchangeable S-adenosyl-L-methionine.</text>
</comment>
<comment type="subcellular location">
    <subcellularLocation>
        <location evidence="5">Cytoplasm</location>
    </subcellularLocation>
</comment>
<comment type="similarity">
    <text evidence="5">Belongs to the radical SAM superfamily. RlmN family.</text>
</comment>
<accession>Q3SHI2</accession>
<gene>
    <name type="ordered locus">Tbd_1951</name>
</gene>
<organism>
    <name type="scientific">Thiobacillus denitrificans (strain ATCC 25259 / T1)</name>
    <dbReference type="NCBI Taxonomy" id="292415"/>
    <lineage>
        <taxon>Bacteria</taxon>
        <taxon>Pseudomonadati</taxon>
        <taxon>Pseudomonadota</taxon>
        <taxon>Betaproteobacteria</taxon>
        <taxon>Nitrosomonadales</taxon>
        <taxon>Thiobacillaceae</taxon>
        <taxon>Thiobacillus</taxon>
    </lineage>
</organism>
<dbReference type="EC" id="2.1.1.-"/>
<dbReference type="EMBL" id="CP000116">
    <property type="protein sequence ID" value="AAZ97904.1"/>
    <property type="molecule type" value="Genomic_DNA"/>
</dbReference>
<dbReference type="RefSeq" id="WP_011312463.1">
    <property type="nucleotide sequence ID" value="NC_007404.1"/>
</dbReference>
<dbReference type="SMR" id="Q3SHI2"/>
<dbReference type="STRING" id="292415.Tbd_1951"/>
<dbReference type="KEGG" id="tbd:Tbd_1951"/>
<dbReference type="eggNOG" id="COG0820">
    <property type="taxonomic scope" value="Bacteria"/>
</dbReference>
<dbReference type="HOGENOM" id="CLU_029101_3_3_4"/>
<dbReference type="OrthoDB" id="9793973at2"/>
<dbReference type="Proteomes" id="UP000008291">
    <property type="component" value="Chromosome"/>
</dbReference>
<dbReference type="GO" id="GO:0005737">
    <property type="term" value="C:cytoplasm"/>
    <property type="evidence" value="ECO:0007669"/>
    <property type="project" value="UniProtKB-SubCell"/>
</dbReference>
<dbReference type="GO" id="GO:0051539">
    <property type="term" value="F:4 iron, 4 sulfur cluster binding"/>
    <property type="evidence" value="ECO:0007669"/>
    <property type="project" value="UniProtKB-KW"/>
</dbReference>
<dbReference type="GO" id="GO:0046872">
    <property type="term" value="F:metal ion binding"/>
    <property type="evidence" value="ECO:0007669"/>
    <property type="project" value="UniProtKB-KW"/>
</dbReference>
<dbReference type="GO" id="GO:0008173">
    <property type="term" value="F:RNA methyltransferase activity"/>
    <property type="evidence" value="ECO:0007669"/>
    <property type="project" value="InterPro"/>
</dbReference>
<dbReference type="GO" id="GO:0070475">
    <property type="term" value="P:rRNA base methylation"/>
    <property type="evidence" value="ECO:0007669"/>
    <property type="project" value="TreeGrafter"/>
</dbReference>
<dbReference type="GO" id="GO:0030488">
    <property type="term" value="P:tRNA methylation"/>
    <property type="evidence" value="ECO:0007669"/>
    <property type="project" value="TreeGrafter"/>
</dbReference>
<dbReference type="Gene3D" id="3.20.20.70">
    <property type="entry name" value="Aldolase class I"/>
    <property type="match status" value="1"/>
</dbReference>
<dbReference type="InterPro" id="IPR013785">
    <property type="entry name" value="Aldolase_TIM"/>
</dbReference>
<dbReference type="InterPro" id="IPR040072">
    <property type="entry name" value="Methyltransferase_A"/>
</dbReference>
<dbReference type="InterPro" id="IPR004383">
    <property type="entry name" value="rRNA_lsu_MTrfase_RlmN/Cfr"/>
</dbReference>
<dbReference type="InterPro" id="IPR007197">
    <property type="entry name" value="rSAM"/>
</dbReference>
<dbReference type="NCBIfam" id="NF011034">
    <property type="entry name" value="PRK14464.1"/>
    <property type="match status" value="1"/>
</dbReference>
<dbReference type="PANTHER" id="PTHR30544">
    <property type="entry name" value="23S RRNA METHYLTRANSFERASE"/>
    <property type="match status" value="1"/>
</dbReference>
<dbReference type="PANTHER" id="PTHR30544:SF5">
    <property type="entry name" value="RADICAL SAM CORE DOMAIN-CONTAINING PROTEIN"/>
    <property type="match status" value="1"/>
</dbReference>
<dbReference type="Pfam" id="PF04055">
    <property type="entry name" value="Radical_SAM"/>
    <property type="match status" value="1"/>
</dbReference>
<dbReference type="PIRSF" id="PIRSF006004">
    <property type="entry name" value="CHP00048"/>
    <property type="match status" value="1"/>
</dbReference>
<dbReference type="SFLD" id="SFLDF00275">
    <property type="entry name" value="adenosine_C2_methyltransferase"/>
    <property type="match status" value="1"/>
</dbReference>
<dbReference type="SFLD" id="SFLDG01062">
    <property type="entry name" value="methyltransferase_(Class_A)"/>
    <property type="match status" value="1"/>
</dbReference>
<dbReference type="SUPFAM" id="SSF102114">
    <property type="entry name" value="Radical SAM enzymes"/>
    <property type="match status" value="1"/>
</dbReference>
<dbReference type="PROSITE" id="PS51918">
    <property type="entry name" value="RADICAL_SAM"/>
    <property type="match status" value="1"/>
</dbReference>
<keyword id="KW-0004">4Fe-4S</keyword>
<keyword id="KW-0963">Cytoplasm</keyword>
<keyword id="KW-1015">Disulfide bond</keyword>
<keyword id="KW-0408">Iron</keyword>
<keyword id="KW-0411">Iron-sulfur</keyword>
<keyword id="KW-0479">Metal-binding</keyword>
<keyword id="KW-0489">Methyltransferase</keyword>
<keyword id="KW-1185">Reference proteome</keyword>
<keyword id="KW-0949">S-adenosyl-L-methionine</keyword>
<keyword id="KW-0808">Transferase</keyword>
<sequence length="362" mass="39526">MRLPELRQRLRDHGAAPCHAGRVLRAWVAGRPLDNRRQRAEDFLPLRLRNALPGLFDELRNLAQVHSEHPGEDGSARLLVRLADGQTVESVLLPRDGVCVSTQVGCAVGCVFCMTGRAGLLRQLSGAEIVAQVVLARSRRPVRKVVFMGMGEPAHNLDNVLDAIELLGLEGGIGHKNLVFSTVGDRRVFERLPQSTVKPARALSLHTTDRALRRRLLPRAPDIAPQELVELGEAYARRTGYPIQYQWTLLEGINDTEAELEGIARLLAGRYAVMNLIPYNATEADGFNRPSWARAAEMARRLHRRGVLAKLRHSAGQDVDGGCGQLRARALDAAPVLARRPLPSAETPAASPKAAASIGFPG</sequence>